<protein>
    <recommendedName>
        <fullName evidence="1">Cysteine--tRNA ligase</fullName>
        <ecNumber evidence="1">6.1.1.16</ecNumber>
    </recommendedName>
    <alternativeName>
        <fullName evidence="1">Cysteinyl-tRNA synthetase</fullName>
        <shortName evidence="1">CysRS</shortName>
    </alternativeName>
</protein>
<comment type="catalytic activity">
    <reaction evidence="1">
        <text>tRNA(Cys) + L-cysteine + ATP = L-cysteinyl-tRNA(Cys) + AMP + diphosphate</text>
        <dbReference type="Rhea" id="RHEA:17773"/>
        <dbReference type="Rhea" id="RHEA-COMP:9661"/>
        <dbReference type="Rhea" id="RHEA-COMP:9679"/>
        <dbReference type="ChEBI" id="CHEBI:30616"/>
        <dbReference type="ChEBI" id="CHEBI:33019"/>
        <dbReference type="ChEBI" id="CHEBI:35235"/>
        <dbReference type="ChEBI" id="CHEBI:78442"/>
        <dbReference type="ChEBI" id="CHEBI:78517"/>
        <dbReference type="ChEBI" id="CHEBI:456215"/>
        <dbReference type="EC" id="6.1.1.16"/>
    </reaction>
</comment>
<comment type="cofactor">
    <cofactor evidence="1">
        <name>Zn(2+)</name>
        <dbReference type="ChEBI" id="CHEBI:29105"/>
    </cofactor>
    <text evidence="1">Binds 1 zinc ion per subunit.</text>
</comment>
<comment type="subunit">
    <text evidence="1">Monomer.</text>
</comment>
<comment type="subcellular location">
    <subcellularLocation>
        <location evidence="1">Cytoplasm</location>
    </subcellularLocation>
</comment>
<comment type="similarity">
    <text evidence="1">Belongs to the class-I aminoacyl-tRNA synthetase family.</text>
</comment>
<evidence type="ECO:0000255" key="1">
    <source>
        <dbReference type="HAMAP-Rule" id="MF_00041"/>
    </source>
</evidence>
<accession>C3JYD3</accession>
<gene>
    <name evidence="1" type="primary">cysS</name>
    <name type="ordered locus">PFLU_3871</name>
</gene>
<organism>
    <name type="scientific">Pseudomonas fluorescens (strain SBW25)</name>
    <dbReference type="NCBI Taxonomy" id="216595"/>
    <lineage>
        <taxon>Bacteria</taxon>
        <taxon>Pseudomonadati</taxon>
        <taxon>Pseudomonadota</taxon>
        <taxon>Gammaproteobacteria</taxon>
        <taxon>Pseudomonadales</taxon>
        <taxon>Pseudomonadaceae</taxon>
        <taxon>Pseudomonas</taxon>
    </lineage>
</organism>
<reference key="1">
    <citation type="journal article" date="2009" name="Genome Biol.">
        <title>Genomic and genetic analyses of diversity and plant interactions of Pseudomonas fluorescens.</title>
        <authorList>
            <person name="Silby M.W."/>
            <person name="Cerdeno-Tarraga A.M."/>
            <person name="Vernikos G.S."/>
            <person name="Giddens S.R."/>
            <person name="Jackson R.W."/>
            <person name="Preston G.M."/>
            <person name="Zhang X.-X."/>
            <person name="Moon C.D."/>
            <person name="Gehrig S.M."/>
            <person name="Godfrey S.A.C."/>
            <person name="Knight C.G."/>
            <person name="Malone J.G."/>
            <person name="Robinson Z."/>
            <person name="Spiers A.J."/>
            <person name="Harris S."/>
            <person name="Challis G.L."/>
            <person name="Yaxley A.M."/>
            <person name="Harris D."/>
            <person name="Seeger K."/>
            <person name="Murphy L."/>
            <person name="Rutter S."/>
            <person name="Squares R."/>
            <person name="Quail M.A."/>
            <person name="Saunders E."/>
            <person name="Mavromatis K."/>
            <person name="Brettin T.S."/>
            <person name="Bentley S.D."/>
            <person name="Hothersall J."/>
            <person name="Stephens E."/>
            <person name="Thomas C.M."/>
            <person name="Parkhill J."/>
            <person name="Levy S.B."/>
            <person name="Rainey P.B."/>
            <person name="Thomson N.R."/>
        </authorList>
    </citation>
    <scope>NUCLEOTIDE SEQUENCE [LARGE SCALE GENOMIC DNA]</scope>
    <source>
        <strain>SBW25</strain>
    </source>
</reference>
<keyword id="KW-0030">Aminoacyl-tRNA synthetase</keyword>
<keyword id="KW-0067">ATP-binding</keyword>
<keyword id="KW-0963">Cytoplasm</keyword>
<keyword id="KW-0436">Ligase</keyword>
<keyword id="KW-0479">Metal-binding</keyword>
<keyword id="KW-0547">Nucleotide-binding</keyword>
<keyword id="KW-0648">Protein biosynthesis</keyword>
<keyword id="KW-0862">Zinc</keyword>
<sequence>MLTIYNTLSKTKEVFKPLDGNKVRMYVCGMTVYDYCHIGHGRSMVAFDLVTRWLRFSGYDLTYVRNITDIDDKIINRANENGESFDALTERMIAAMHEDEARLNILKPDMEPRATDHIPGMHAMIQTLIDKGYAYAPGNGDVYYRVAKFMGYGKLSRKKIEDLRIGARIEVDEAKQDPLDFVLWKGTKPGEPSWESPWGAGRPGWHIECSVMSTCCLGDTFDIHGGGSDLEFPHHENEIAQSEAATGKTYANAWMHCGMIRINGEKMSKSLNNFFTIRDVLEKYHPEVVRYLLVSSHYRSAINYSEDNLKDAKGALERFYHALKGLPSVAPAGGEAFVARFTEVMNDDFGTPEACAVLFEMVREINRLRESDLDAAAGLAARLKELASVLGVLQMKPEDFLQAGAEGRVDAAEVDALIQARLAARANKDWAESDRIRDQLTAMGVVLEDGKGGTTWRLADQA</sequence>
<feature type="chain" id="PRO_1000202130" description="Cysteine--tRNA ligase">
    <location>
        <begin position="1"/>
        <end position="462"/>
    </location>
</feature>
<feature type="short sequence motif" description="'HIGH' region">
    <location>
        <begin position="30"/>
        <end position="40"/>
    </location>
</feature>
<feature type="short sequence motif" description="'KMSKS' region">
    <location>
        <begin position="266"/>
        <end position="270"/>
    </location>
</feature>
<feature type="binding site" evidence="1">
    <location>
        <position position="28"/>
    </location>
    <ligand>
        <name>Zn(2+)</name>
        <dbReference type="ChEBI" id="CHEBI:29105"/>
    </ligand>
</feature>
<feature type="binding site" evidence="1">
    <location>
        <position position="209"/>
    </location>
    <ligand>
        <name>Zn(2+)</name>
        <dbReference type="ChEBI" id="CHEBI:29105"/>
    </ligand>
</feature>
<feature type="binding site" evidence="1">
    <location>
        <position position="234"/>
    </location>
    <ligand>
        <name>Zn(2+)</name>
        <dbReference type="ChEBI" id="CHEBI:29105"/>
    </ligand>
</feature>
<feature type="binding site" evidence="1">
    <location>
        <position position="238"/>
    </location>
    <ligand>
        <name>Zn(2+)</name>
        <dbReference type="ChEBI" id="CHEBI:29105"/>
    </ligand>
</feature>
<feature type="binding site" evidence="1">
    <location>
        <position position="269"/>
    </location>
    <ligand>
        <name>ATP</name>
        <dbReference type="ChEBI" id="CHEBI:30616"/>
    </ligand>
</feature>
<proteinExistence type="inferred from homology"/>
<dbReference type="EC" id="6.1.1.16" evidence="1"/>
<dbReference type="EMBL" id="AM181176">
    <property type="protein sequence ID" value="CAY50215.1"/>
    <property type="molecule type" value="Genomic_DNA"/>
</dbReference>
<dbReference type="RefSeq" id="WP_012724992.1">
    <property type="nucleotide sequence ID" value="NC_012660.1"/>
</dbReference>
<dbReference type="SMR" id="C3JYD3"/>
<dbReference type="STRING" id="294.SRM1_03483"/>
<dbReference type="eggNOG" id="COG0215">
    <property type="taxonomic scope" value="Bacteria"/>
</dbReference>
<dbReference type="HOGENOM" id="CLU_013528_0_1_6"/>
<dbReference type="OrthoDB" id="9815130at2"/>
<dbReference type="GO" id="GO:0005829">
    <property type="term" value="C:cytosol"/>
    <property type="evidence" value="ECO:0007669"/>
    <property type="project" value="TreeGrafter"/>
</dbReference>
<dbReference type="GO" id="GO:0005524">
    <property type="term" value="F:ATP binding"/>
    <property type="evidence" value="ECO:0007669"/>
    <property type="project" value="UniProtKB-UniRule"/>
</dbReference>
<dbReference type="GO" id="GO:0004817">
    <property type="term" value="F:cysteine-tRNA ligase activity"/>
    <property type="evidence" value="ECO:0007669"/>
    <property type="project" value="UniProtKB-UniRule"/>
</dbReference>
<dbReference type="GO" id="GO:0008270">
    <property type="term" value="F:zinc ion binding"/>
    <property type="evidence" value="ECO:0007669"/>
    <property type="project" value="UniProtKB-UniRule"/>
</dbReference>
<dbReference type="GO" id="GO:0006423">
    <property type="term" value="P:cysteinyl-tRNA aminoacylation"/>
    <property type="evidence" value="ECO:0007669"/>
    <property type="project" value="UniProtKB-UniRule"/>
</dbReference>
<dbReference type="CDD" id="cd07963">
    <property type="entry name" value="Anticodon_Ia_Cys"/>
    <property type="match status" value="1"/>
</dbReference>
<dbReference type="CDD" id="cd00672">
    <property type="entry name" value="CysRS_core"/>
    <property type="match status" value="1"/>
</dbReference>
<dbReference type="FunFam" id="3.40.50.620:FF:000009">
    <property type="entry name" value="Cysteine--tRNA ligase"/>
    <property type="match status" value="1"/>
</dbReference>
<dbReference type="Gene3D" id="1.20.120.1910">
    <property type="entry name" value="Cysteine-tRNA ligase, C-terminal anti-codon recognition domain"/>
    <property type="match status" value="1"/>
</dbReference>
<dbReference type="Gene3D" id="3.40.50.620">
    <property type="entry name" value="HUPs"/>
    <property type="match status" value="1"/>
</dbReference>
<dbReference type="HAMAP" id="MF_00041">
    <property type="entry name" value="Cys_tRNA_synth"/>
    <property type="match status" value="1"/>
</dbReference>
<dbReference type="InterPro" id="IPR015803">
    <property type="entry name" value="Cys-tRNA-ligase"/>
</dbReference>
<dbReference type="InterPro" id="IPR015273">
    <property type="entry name" value="Cys-tRNA-synt_Ia_DALR"/>
</dbReference>
<dbReference type="InterPro" id="IPR024909">
    <property type="entry name" value="Cys-tRNA/MSH_ligase"/>
</dbReference>
<dbReference type="InterPro" id="IPR056411">
    <property type="entry name" value="CysS_C"/>
</dbReference>
<dbReference type="InterPro" id="IPR014729">
    <property type="entry name" value="Rossmann-like_a/b/a_fold"/>
</dbReference>
<dbReference type="InterPro" id="IPR032678">
    <property type="entry name" value="tRNA-synt_1_cat_dom"/>
</dbReference>
<dbReference type="InterPro" id="IPR009080">
    <property type="entry name" value="tRNAsynth_Ia_anticodon-bd"/>
</dbReference>
<dbReference type="NCBIfam" id="TIGR00435">
    <property type="entry name" value="cysS"/>
    <property type="match status" value="1"/>
</dbReference>
<dbReference type="PANTHER" id="PTHR10890:SF3">
    <property type="entry name" value="CYSTEINE--TRNA LIGASE, CYTOPLASMIC"/>
    <property type="match status" value="1"/>
</dbReference>
<dbReference type="PANTHER" id="PTHR10890">
    <property type="entry name" value="CYSTEINYL-TRNA SYNTHETASE"/>
    <property type="match status" value="1"/>
</dbReference>
<dbReference type="Pfam" id="PF23493">
    <property type="entry name" value="CysS_C"/>
    <property type="match status" value="1"/>
</dbReference>
<dbReference type="Pfam" id="PF09190">
    <property type="entry name" value="DALR_2"/>
    <property type="match status" value="1"/>
</dbReference>
<dbReference type="Pfam" id="PF01406">
    <property type="entry name" value="tRNA-synt_1e"/>
    <property type="match status" value="1"/>
</dbReference>
<dbReference type="PRINTS" id="PR00983">
    <property type="entry name" value="TRNASYNTHCYS"/>
</dbReference>
<dbReference type="SMART" id="SM00840">
    <property type="entry name" value="DALR_2"/>
    <property type="match status" value="1"/>
</dbReference>
<dbReference type="SUPFAM" id="SSF47323">
    <property type="entry name" value="Anticodon-binding domain of a subclass of class I aminoacyl-tRNA synthetases"/>
    <property type="match status" value="1"/>
</dbReference>
<dbReference type="SUPFAM" id="SSF52374">
    <property type="entry name" value="Nucleotidylyl transferase"/>
    <property type="match status" value="1"/>
</dbReference>
<name>SYC_PSEFS</name>